<comment type="function">
    <text evidence="1">Catalyzes the folate-dependent formation of 5-methyl-uridine at position 54 (M-5-U54) in all tRNAs.</text>
</comment>
<comment type="catalytic activity">
    <reaction evidence="1">
        <text>uridine(54) in tRNA + (6R)-5,10-methylene-5,6,7,8-tetrahydrofolate + NADH + H(+) = 5-methyluridine(54) in tRNA + (6S)-5,6,7,8-tetrahydrofolate + NAD(+)</text>
        <dbReference type="Rhea" id="RHEA:16873"/>
        <dbReference type="Rhea" id="RHEA-COMP:10167"/>
        <dbReference type="Rhea" id="RHEA-COMP:10193"/>
        <dbReference type="ChEBI" id="CHEBI:15378"/>
        <dbReference type="ChEBI" id="CHEBI:15636"/>
        <dbReference type="ChEBI" id="CHEBI:57453"/>
        <dbReference type="ChEBI" id="CHEBI:57540"/>
        <dbReference type="ChEBI" id="CHEBI:57945"/>
        <dbReference type="ChEBI" id="CHEBI:65315"/>
        <dbReference type="ChEBI" id="CHEBI:74447"/>
        <dbReference type="EC" id="2.1.1.74"/>
    </reaction>
</comment>
<comment type="catalytic activity">
    <reaction evidence="1">
        <text>uridine(54) in tRNA + (6R)-5,10-methylene-5,6,7,8-tetrahydrofolate + NADPH + H(+) = 5-methyluridine(54) in tRNA + (6S)-5,6,7,8-tetrahydrofolate + NADP(+)</text>
        <dbReference type="Rhea" id="RHEA:62372"/>
        <dbReference type="Rhea" id="RHEA-COMP:10167"/>
        <dbReference type="Rhea" id="RHEA-COMP:10193"/>
        <dbReference type="ChEBI" id="CHEBI:15378"/>
        <dbReference type="ChEBI" id="CHEBI:15636"/>
        <dbReference type="ChEBI" id="CHEBI:57453"/>
        <dbReference type="ChEBI" id="CHEBI:57783"/>
        <dbReference type="ChEBI" id="CHEBI:58349"/>
        <dbReference type="ChEBI" id="CHEBI:65315"/>
        <dbReference type="ChEBI" id="CHEBI:74447"/>
        <dbReference type="EC" id="2.1.1.74"/>
    </reaction>
</comment>
<comment type="cofactor">
    <cofactor evidence="1">
        <name>FAD</name>
        <dbReference type="ChEBI" id="CHEBI:57692"/>
    </cofactor>
</comment>
<comment type="subcellular location">
    <subcellularLocation>
        <location evidence="1">Cytoplasm</location>
    </subcellularLocation>
</comment>
<comment type="similarity">
    <text evidence="1">Belongs to the MnmG family. TrmFO subfamily.</text>
</comment>
<dbReference type="EC" id="2.1.1.74" evidence="1"/>
<dbReference type="EMBL" id="AE015929">
    <property type="protein sequence ID" value="AAO04524.1"/>
    <property type="molecule type" value="Genomic_DNA"/>
</dbReference>
<dbReference type="RefSeq" id="NP_764482.1">
    <property type="nucleotide sequence ID" value="NC_004461.1"/>
</dbReference>
<dbReference type="RefSeq" id="WP_001832560.1">
    <property type="nucleotide sequence ID" value="NZ_WBME01000001.1"/>
</dbReference>
<dbReference type="SMR" id="Q8CPH2"/>
<dbReference type="GeneID" id="50018937"/>
<dbReference type="KEGG" id="sep:SE_0927"/>
<dbReference type="PATRIC" id="fig|176280.10.peg.902"/>
<dbReference type="eggNOG" id="COG1206">
    <property type="taxonomic scope" value="Bacteria"/>
</dbReference>
<dbReference type="HOGENOM" id="CLU_033057_1_0_9"/>
<dbReference type="OrthoDB" id="9803114at2"/>
<dbReference type="Proteomes" id="UP000001411">
    <property type="component" value="Chromosome"/>
</dbReference>
<dbReference type="GO" id="GO:0005829">
    <property type="term" value="C:cytosol"/>
    <property type="evidence" value="ECO:0007669"/>
    <property type="project" value="TreeGrafter"/>
</dbReference>
<dbReference type="GO" id="GO:0050660">
    <property type="term" value="F:flavin adenine dinucleotide binding"/>
    <property type="evidence" value="ECO:0007669"/>
    <property type="project" value="UniProtKB-UniRule"/>
</dbReference>
<dbReference type="GO" id="GO:0047151">
    <property type="term" value="F:tRNA (uracil(54)-C5)-methyltransferase activity, 5,10-methylenetetrahydrofolate-dependent"/>
    <property type="evidence" value="ECO:0007669"/>
    <property type="project" value="UniProtKB-UniRule"/>
</dbReference>
<dbReference type="GO" id="GO:0030488">
    <property type="term" value="P:tRNA methylation"/>
    <property type="evidence" value="ECO:0007669"/>
    <property type="project" value="TreeGrafter"/>
</dbReference>
<dbReference type="GO" id="GO:0002098">
    <property type="term" value="P:tRNA wobble uridine modification"/>
    <property type="evidence" value="ECO:0007669"/>
    <property type="project" value="TreeGrafter"/>
</dbReference>
<dbReference type="FunFam" id="3.50.50.60:FF:000035">
    <property type="entry name" value="Methylenetetrahydrofolate--tRNA-(uracil-5-)-methyltransferase TrmFO"/>
    <property type="match status" value="1"/>
</dbReference>
<dbReference type="FunFam" id="3.50.50.60:FF:000040">
    <property type="entry name" value="Methylenetetrahydrofolate--tRNA-(uracil-5-)-methyltransferase TrmFO"/>
    <property type="match status" value="1"/>
</dbReference>
<dbReference type="Gene3D" id="3.50.50.60">
    <property type="entry name" value="FAD/NAD(P)-binding domain"/>
    <property type="match status" value="2"/>
</dbReference>
<dbReference type="HAMAP" id="MF_01037">
    <property type="entry name" value="TrmFO"/>
    <property type="match status" value="1"/>
</dbReference>
<dbReference type="InterPro" id="IPR036188">
    <property type="entry name" value="FAD/NAD-bd_sf"/>
</dbReference>
<dbReference type="InterPro" id="IPR002218">
    <property type="entry name" value="MnmG-rel"/>
</dbReference>
<dbReference type="InterPro" id="IPR020595">
    <property type="entry name" value="MnmG-rel_CS"/>
</dbReference>
<dbReference type="InterPro" id="IPR040131">
    <property type="entry name" value="MnmG_N"/>
</dbReference>
<dbReference type="InterPro" id="IPR004417">
    <property type="entry name" value="TrmFO"/>
</dbReference>
<dbReference type="NCBIfam" id="TIGR00137">
    <property type="entry name" value="gid_trmFO"/>
    <property type="match status" value="1"/>
</dbReference>
<dbReference type="NCBIfam" id="NF003739">
    <property type="entry name" value="PRK05335.1"/>
    <property type="match status" value="1"/>
</dbReference>
<dbReference type="PANTHER" id="PTHR11806">
    <property type="entry name" value="GLUCOSE INHIBITED DIVISION PROTEIN A"/>
    <property type="match status" value="1"/>
</dbReference>
<dbReference type="PANTHER" id="PTHR11806:SF2">
    <property type="entry name" value="METHYLENETETRAHYDROFOLATE--TRNA-(URACIL-5-)-METHYLTRANSFERASE TRMFO"/>
    <property type="match status" value="1"/>
</dbReference>
<dbReference type="Pfam" id="PF01134">
    <property type="entry name" value="GIDA"/>
    <property type="match status" value="1"/>
</dbReference>
<dbReference type="SUPFAM" id="SSF51905">
    <property type="entry name" value="FAD/NAD(P)-binding domain"/>
    <property type="match status" value="1"/>
</dbReference>
<dbReference type="PROSITE" id="PS01281">
    <property type="entry name" value="GIDA_2"/>
    <property type="match status" value="1"/>
</dbReference>
<gene>
    <name evidence="1" type="primary">trmFO</name>
    <name type="synonym">gid</name>
    <name type="ordered locus">SE_0927</name>
</gene>
<accession>Q8CPH2</accession>
<organism>
    <name type="scientific">Staphylococcus epidermidis (strain ATCC 12228 / FDA PCI 1200)</name>
    <dbReference type="NCBI Taxonomy" id="176280"/>
    <lineage>
        <taxon>Bacteria</taxon>
        <taxon>Bacillati</taxon>
        <taxon>Bacillota</taxon>
        <taxon>Bacilli</taxon>
        <taxon>Bacillales</taxon>
        <taxon>Staphylococcaceae</taxon>
        <taxon>Staphylococcus</taxon>
    </lineage>
</organism>
<reference key="1">
    <citation type="journal article" date="2003" name="Mol. Microbiol.">
        <title>Genome-based analysis of virulence genes in a non-biofilm-forming Staphylococcus epidermidis strain (ATCC 12228).</title>
        <authorList>
            <person name="Zhang Y.-Q."/>
            <person name="Ren S.-X."/>
            <person name="Li H.-L."/>
            <person name="Wang Y.-X."/>
            <person name="Fu G."/>
            <person name="Yang J."/>
            <person name="Qin Z.-Q."/>
            <person name="Miao Y.-G."/>
            <person name="Wang W.-Y."/>
            <person name="Chen R.-S."/>
            <person name="Shen Y."/>
            <person name="Chen Z."/>
            <person name="Yuan Z.-H."/>
            <person name="Zhao G.-P."/>
            <person name="Qu D."/>
            <person name="Danchin A."/>
            <person name="Wen Y.-M."/>
        </authorList>
    </citation>
    <scope>NUCLEOTIDE SEQUENCE [LARGE SCALE GENOMIC DNA]</scope>
    <source>
        <strain>ATCC 12228 / FDA PCI 1200</strain>
    </source>
</reference>
<evidence type="ECO:0000255" key="1">
    <source>
        <dbReference type="HAMAP-Rule" id="MF_01037"/>
    </source>
</evidence>
<proteinExistence type="inferred from homology"/>
<protein>
    <recommendedName>
        <fullName evidence="1">Methylenetetrahydrofolate--tRNA-(uracil-5-)-methyltransferase TrmFO</fullName>
        <ecNumber evidence="1">2.1.1.74</ecNumber>
    </recommendedName>
    <alternativeName>
        <fullName evidence="1">Folate-dependent tRNA (uracil-5-)-methyltransferase</fullName>
    </alternativeName>
    <alternativeName>
        <fullName evidence="1">Folate-dependent tRNA(M-5-U54)-methyltransferase</fullName>
    </alternativeName>
</protein>
<name>TRMFO_STAES</name>
<feature type="chain" id="PRO_0000117265" description="Methylenetetrahydrofolate--tRNA-(uracil-5-)-methyltransferase TrmFO">
    <location>
        <begin position="1"/>
        <end position="435"/>
    </location>
</feature>
<feature type="binding site" evidence="1">
    <location>
        <begin position="9"/>
        <end position="14"/>
    </location>
    <ligand>
        <name>FAD</name>
        <dbReference type="ChEBI" id="CHEBI:57692"/>
    </ligand>
</feature>
<sequence length="435" mass="48726">MTQKVNVVGAGLAGSEAAYQLAQRGIKVNLIEMRPVKQTPAHHTDKFAELVCSNSLRGNALTNAVGVLKEEMRHLDSLIITSADKARVPAGGALAVDRHDFAGYITDTLRNHPNITVLNEEVNHIPEGYTIIATGPLTTEHLAQEIVDITGKDQLYFYDAAAPIIEKDSINMDKVYLKSRYDKGEAAYLNCPMTEEEFNRFYDAVLEAEVAPVNEFEKEKYFEGCMPFEVMAERGRKTLLFGPMKPVGLEDPKTGKRPYAVVQLRQDDAAGTLYNIVGFQTHLKWGAQKEVIRLIPGLENVDIVRYGVMHRNTFINSPDVLNEKYELKGHDNLYFAGQMTGVEGYVESAASGLVAGINLAHKILDKGEVIFPRETMIGSMAYYISHAKNEKNFQPMNANFGLLPSLEKRIKDKKERYETQAKRALEYLDNYKQTL</sequence>
<keyword id="KW-0963">Cytoplasm</keyword>
<keyword id="KW-0274">FAD</keyword>
<keyword id="KW-0285">Flavoprotein</keyword>
<keyword id="KW-0489">Methyltransferase</keyword>
<keyword id="KW-0520">NAD</keyword>
<keyword id="KW-0521">NADP</keyword>
<keyword id="KW-0808">Transferase</keyword>
<keyword id="KW-0819">tRNA processing</keyword>